<evidence type="ECO:0000255" key="1">
    <source>
        <dbReference type="HAMAP-Rule" id="MF_00159"/>
    </source>
</evidence>
<feature type="chain" id="PRO_1000011483" description="4-hydroxy-3-methylbut-2-en-1-yl diphosphate synthase (flavodoxin)">
    <location>
        <begin position="1"/>
        <end position="428"/>
    </location>
</feature>
<feature type="binding site" evidence="1">
    <location>
        <position position="300"/>
    </location>
    <ligand>
        <name>[4Fe-4S] cluster</name>
        <dbReference type="ChEBI" id="CHEBI:49883"/>
    </ligand>
</feature>
<feature type="binding site" evidence="1">
    <location>
        <position position="303"/>
    </location>
    <ligand>
        <name>[4Fe-4S] cluster</name>
        <dbReference type="ChEBI" id="CHEBI:49883"/>
    </ligand>
</feature>
<feature type="binding site" evidence="1">
    <location>
        <position position="346"/>
    </location>
    <ligand>
        <name>[4Fe-4S] cluster</name>
        <dbReference type="ChEBI" id="CHEBI:49883"/>
    </ligand>
</feature>
<feature type="binding site" evidence="1">
    <location>
        <position position="353"/>
    </location>
    <ligand>
        <name>[4Fe-4S] cluster</name>
        <dbReference type="ChEBI" id="CHEBI:49883"/>
    </ligand>
</feature>
<reference key="1">
    <citation type="submission" date="2006-03" db="EMBL/GenBank/DDBJ databases">
        <title>Complete sequence of Methylobacillus flagellatus KT.</title>
        <authorList>
            <consortium name="US DOE Joint Genome Institute"/>
            <person name="Copeland A."/>
            <person name="Lucas S."/>
            <person name="Lapidus A."/>
            <person name="Barry K."/>
            <person name="Detter J.C."/>
            <person name="Glavina del Rio T."/>
            <person name="Hammon N."/>
            <person name="Israni S."/>
            <person name="Dalin E."/>
            <person name="Tice H."/>
            <person name="Pitluck S."/>
            <person name="Brettin T."/>
            <person name="Bruce D."/>
            <person name="Han C."/>
            <person name="Tapia R."/>
            <person name="Saunders E."/>
            <person name="Gilna P."/>
            <person name="Schmutz J."/>
            <person name="Larimer F."/>
            <person name="Land M."/>
            <person name="Kyrpides N."/>
            <person name="Anderson I."/>
            <person name="Richardson P."/>
        </authorList>
    </citation>
    <scope>NUCLEOTIDE SEQUENCE [LARGE SCALE GENOMIC DNA]</scope>
    <source>
        <strain>ATCC 51484 / DSM 6875 / VKM B-1610 / KT</strain>
    </source>
</reference>
<sequence>MDHQSLSRRTTKTVMIGHVPVGSSAPVVVQSMTNTDTADAAATVRQVYELWRAGSEIVRITVNSPEAAAQVGAIRRQLDDLGCNVPLVGDFHFNGHRLLAQYPDCAEALAKYRINPGNVGKGSKRDEQFSAMIKAAIDYNKPVRIGVNWGSLDQAKMARMMDENSKRAAPLAADALMREMLIQSALENAAAAEELGLPSDRIIISCKVSAVQDLIKVYRDLGSRCDYPLHLGLTEAGMGSKGIVASTAALSVLLQDGIGDTIRVSLTPEPGESRTKEVVVAQEILQTMGIRSFTPLVTACPGCGRTTSTFFQELAQKIQHYLRDQMPVWRSQYPGVENMSVAVMGCVVNGPGESKLANIGISLPGTGEVPVAPVYVDGEKTVTLKGERIADDFKVIVEEYVRVNYAEGGRLRQQGTGTGLKTIPLKAI</sequence>
<proteinExistence type="inferred from homology"/>
<keyword id="KW-0004">4Fe-4S</keyword>
<keyword id="KW-0408">Iron</keyword>
<keyword id="KW-0411">Iron-sulfur</keyword>
<keyword id="KW-0414">Isoprene biosynthesis</keyword>
<keyword id="KW-0479">Metal-binding</keyword>
<keyword id="KW-0560">Oxidoreductase</keyword>
<keyword id="KW-1185">Reference proteome</keyword>
<dbReference type="EC" id="1.17.7.3" evidence="1"/>
<dbReference type="EMBL" id="CP000284">
    <property type="protein sequence ID" value="ABE49888.1"/>
    <property type="molecule type" value="Genomic_DNA"/>
</dbReference>
<dbReference type="RefSeq" id="WP_011479842.1">
    <property type="nucleotide sequence ID" value="NC_007947.1"/>
</dbReference>
<dbReference type="SMR" id="Q1H0U9"/>
<dbReference type="STRING" id="265072.Mfla_1620"/>
<dbReference type="KEGG" id="mfa:Mfla_1620"/>
<dbReference type="eggNOG" id="COG0821">
    <property type="taxonomic scope" value="Bacteria"/>
</dbReference>
<dbReference type="HOGENOM" id="CLU_042258_1_0_4"/>
<dbReference type="UniPathway" id="UPA00056">
    <property type="reaction ID" value="UER00096"/>
</dbReference>
<dbReference type="Proteomes" id="UP000002440">
    <property type="component" value="Chromosome"/>
</dbReference>
<dbReference type="GO" id="GO:0051539">
    <property type="term" value="F:4 iron, 4 sulfur cluster binding"/>
    <property type="evidence" value="ECO:0007669"/>
    <property type="project" value="UniProtKB-UniRule"/>
</dbReference>
<dbReference type="GO" id="GO:0046429">
    <property type="term" value="F:4-hydroxy-3-methylbut-2-en-1-yl diphosphate synthase activity (ferredoxin)"/>
    <property type="evidence" value="ECO:0007669"/>
    <property type="project" value="UniProtKB-UniRule"/>
</dbReference>
<dbReference type="GO" id="GO:0141197">
    <property type="term" value="F:4-hydroxy-3-methylbut-2-enyl-diphosphate synthase activity (flavodoxin)"/>
    <property type="evidence" value="ECO:0007669"/>
    <property type="project" value="UniProtKB-EC"/>
</dbReference>
<dbReference type="GO" id="GO:0005506">
    <property type="term" value="F:iron ion binding"/>
    <property type="evidence" value="ECO:0007669"/>
    <property type="project" value="InterPro"/>
</dbReference>
<dbReference type="GO" id="GO:0019288">
    <property type="term" value="P:isopentenyl diphosphate biosynthetic process, methylerythritol 4-phosphate pathway"/>
    <property type="evidence" value="ECO:0007669"/>
    <property type="project" value="UniProtKB-UniRule"/>
</dbReference>
<dbReference type="GO" id="GO:0016114">
    <property type="term" value="P:terpenoid biosynthetic process"/>
    <property type="evidence" value="ECO:0007669"/>
    <property type="project" value="InterPro"/>
</dbReference>
<dbReference type="FunFam" id="3.20.20.20:FF:000001">
    <property type="entry name" value="4-hydroxy-3-methylbut-2-en-1-yl diphosphate synthase (flavodoxin)"/>
    <property type="match status" value="1"/>
</dbReference>
<dbReference type="FunFam" id="3.30.413.10:FF:000012">
    <property type="entry name" value="4-hydroxy-3-methylbut-2-en-1-yl diphosphate synthase (flavodoxin)"/>
    <property type="match status" value="1"/>
</dbReference>
<dbReference type="Gene3D" id="3.20.20.20">
    <property type="entry name" value="Dihydropteroate synthase-like"/>
    <property type="match status" value="1"/>
</dbReference>
<dbReference type="Gene3D" id="3.30.413.10">
    <property type="entry name" value="Sulfite Reductase Hemoprotein, domain 1"/>
    <property type="match status" value="1"/>
</dbReference>
<dbReference type="HAMAP" id="MF_00159">
    <property type="entry name" value="IspG"/>
    <property type="match status" value="1"/>
</dbReference>
<dbReference type="InterPro" id="IPR011005">
    <property type="entry name" value="Dihydropteroate_synth-like_sf"/>
</dbReference>
<dbReference type="InterPro" id="IPR016425">
    <property type="entry name" value="IspG_bac"/>
</dbReference>
<dbReference type="InterPro" id="IPR004588">
    <property type="entry name" value="IspG_bac-typ"/>
</dbReference>
<dbReference type="InterPro" id="IPR045854">
    <property type="entry name" value="NO2/SO3_Rdtase_4Fe4S_sf"/>
</dbReference>
<dbReference type="NCBIfam" id="TIGR00612">
    <property type="entry name" value="ispG_gcpE"/>
    <property type="match status" value="1"/>
</dbReference>
<dbReference type="NCBIfam" id="NF001540">
    <property type="entry name" value="PRK00366.1"/>
    <property type="match status" value="1"/>
</dbReference>
<dbReference type="PANTHER" id="PTHR30454">
    <property type="entry name" value="4-HYDROXY-3-METHYLBUT-2-EN-1-YL DIPHOSPHATE SYNTHASE"/>
    <property type="match status" value="1"/>
</dbReference>
<dbReference type="PANTHER" id="PTHR30454:SF0">
    <property type="entry name" value="4-HYDROXY-3-METHYLBUT-2-EN-1-YL DIPHOSPHATE SYNTHASE (FERREDOXIN), CHLOROPLASTIC"/>
    <property type="match status" value="1"/>
</dbReference>
<dbReference type="Pfam" id="PF04551">
    <property type="entry name" value="GcpE"/>
    <property type="match status" value="1"/>
</dbReference>
<dbReference type="PIRSF" id="PIRSF004640">
    <property type="entry name" value="IspG"/>
    <property type="match status" value="1"/>
</dbReference>
<dbReference type="SUPFAM" id="SSF51717">
    <property type="entry name" value="Dihydropteroate synthetase-like"/>
    <property type="match status" value="1"/>
</dbReference>
<dbReference type="SUPFAM" id="SSF56014">
    <property type="entry name" value="Nitrite and sulphite reductase 4Fe-4S domain-like"/>
    <property type="match status" value="1"/>
</dbReference>
<accession>Q1H0U9</accession>
<organism>
    <name type="scientific">Methylobacillus flagellatus (strain ATCC 51484 / DSM 6875 / VKM B-1610 / KT)</name>
    <dbReference type="NCBI Taxonomy" id="265072"/>
    <lineage>
        <taxon>Bacteria</taxon>
        <taxon>Pseudomonadati</taxon>
        <taxon>Pseudomonadota</taxon>
        <taxon>Betaproteobacteria</taxon>
        <taxon>Nitrosomonadales</taxon>
        <taxon>Methylophilaceae</taxon>
        <taxon>Methylobacillus</taxon>
    </lineage>
</organism>
<comment type="function">
    <text evidence="1">Converts 2C-methyl-D-erythritol 2,4-cyclodiphosphate (ME-2,4cPP) into 1-hydroxy-2-methyl-2-(E)-butenyl 4-diphosphate.</text>
</comment>
<comment type="catalytic activity">
    <reaction evidence="1">
        <text>(2E)-4-hydroxy-3-methylbut-2-enyl diphosphate + oxidized [flavodoxin] + H2O + 2 H(+) = 2-C-methyl-D-erythritol 2,4-cyclic diphosphate + reduced [flavodoxin]</text>
        <dbReference type="Rhea" id="RHEA:43604"/>
        <dbReference type="Rhea" id="RHEA-COMP:10622"/>
        <dbReference type="Rhea" id="RHEA-COMP:10623"/>
        <dbReference type="ChEBI" id="CHEBI:15377"/>
        <dbReference type="ChEBI" id="CHEBI:15378"/>
        <dbReference type="ChEBI" id="CHEBI:57618"/>
        <dbReference type="ChEBI" id="CHEBI:58210"/>
        <dbReference type="ChEBI" id="CHEBI:58483"/>
        <dbReference type="ChEBI" id="CHEBI:128753"/>
        <dbReference type="EC" id="1.17.7.3"/>
    </reaction>
</comment>
<comment type="cofactor">
    <cofactor evidence="1">
        <name>[4Fe-4S] cluster</name>
        <dbReference type="ChEBI" id="CHEBI:49883"/>
    </cofactor>
    <text evidence="1">Binds 1 [4Fe-4S] cluster.</text>
</comment>
<comment type="pathway">
    <text evidence="1">Isoprenoid biosynthesis; isopentenyl diphosphate biosynthesis via DXP pathway; isopentenyl diphosphate from 1-deoxy-D-xylulose 5-phosphate: step 5/6.</text>
</comment>
<comment type="similarity">
    <text evidence="1">Belongs to the IspG family.</text>
</comment>
<gene>
    <name evidence="1" type="primary">ispG</name>
    <name type="ordered locus">Mfla_1620</name>
</gene>
<name>ISPG_METFK</name>
<protein>
    <recommendedName>
        <fullName evidence="1">4-hydroxy-3-methylbut-2-en-1-yl diphosphate synthase (flavodoxin)</fullName>
        <ecNumber evidence="1">1.17.7.3</ecNumber>
    </recommendedName>
    <alternativeName>
        <fullName evidence="1">1-hydroxy-2-methyl-2-(E)-butenyl 4-diphosphate synthase</fullName>
    </alternativeName>
</protein>